<evidence type="ECO:0000250" key="1">
    <source>
        <dbReference type="UniProtKB" id="P62316"/>
    </source>
</evidence>
<evidence type="ECO:0000255" key="2">
    <source>
        <dbReference type="PROSITE-ProRule" id="PRU01346"/>
    </source>
</evidence>
<evidence type="ECO:0000256" key="3">
    <source>
        <dbReference type="SAM" id="MobiDB-lite"/>
    </source>
</evidence>
<evidence type="ECO:0000305" key="4"/>
<evidence type="ECO:0007744" key="5">
    <source>
    </source>
</evidence>
<organism>
    <name type="scientific">Mus musculus</name>
    <name type="common">Mouse</name>
    <dbReference type="NCBI Taxonomy" id="10090"/>
    <lineage>
        <taxon>Eukaryota</taxon>
        <taxon>Metazoa</taxon>
        <taxon>Chordata</taxon>
        <taxon>Craniata</taxon>
        <taxon>Vertebrata</taxon>
        <taxon>Euteleostomi</taxon>
        <taxon>Mammalia</taxon>
        <taxon>Eutheria</taxon>
        <taxon>Euarchontoglires</taxon>
        <taxon>Glires</taxon>
        <taxon>Rodentia</taxon>
        <taxon>Myomorpha</taxon>
        <taxon>Muroidea</taxon>
        <taxon>Muridae</taxon>
        <taxon>Murinae</taxon>
        <taxon>Mus</taxon>
        <taxon>Mus</taxon>
    </lineage>
</organism>
<dbReference type="EMBL" id="AK007389">
    <property type="protein sequence ID" value="BAB25006.1"/>
    <property type="molecule type" value="mRNA"/>
</dbReference>
<dbReference type="EMBL" id="AK045968">
    <property type="protein sequence ID" value="BAC32551.1"/>
    <property type="molecule type" value="mRNA"/>
</dbReference>
<dbReference type="EMBL" id="AK088105">
    <property type="protein sequence ID" value="BAC40147.1"/>
    <property type="molecule type" value="mRNA"/>
</dbReference>
<dbReference type="EMBL" id="BC043014">
    <property type="protein sequence ID" value="AAH43014.1"/>
    <property type="molecule type" value="mRNA"/>
</dbReference>
<dbReference type="EMBL" id="BC051208">
    <property type="protein sequence ID" value="AAH51208.1"/>
    <property type="molecule type" value="mRNA"/>
</dbReference>
<dbReference type="CCDS" id="CCDS20892.1"/>
<dbReference type="RefSeq" id="NP_081219.1">
    <property type="nucleotide sequence ID" value="NM_026943.2"/>
</dbReference>
<dbReference type="RefSeq" id="XP_030097829.1">
    <property type="nucleotide sequence ID" value="XM_030241969.1"/>
</dbReference>
<dbReference type="SMR" id="P62317"/>
<dbReference type="BioGRID" id="223486">
    <property type="interactions" value="77"/>
</dbReference>
<dbReference type="FunCoup" id="P62317">
    <property type="interactions" value="3351"/>
</dbReference>
<dbReference type="IntAct" id="P62317">
    <property type="interactions" value="3"/>
</dbReference>
<dbReference type="MINT" id="P62317"/>
<dbReference type="STRING" id="10090.ENSMUSP00000037597"/>
<dbReference type="iPTMnet" id="P62317"/>
<dbReference type="PhosphoSitePlus" id="P62317"/>
<dbReference type="SwissPalm" id="P62317"/>
<dbReference type="jPOST" id="P62317"/>
<dbReference type="PaxDb" id="10090-ENSMUSP00000037597"/>
<dbReference type="PeptideAtlas" id="P62317"/>
<dbReference type="ProteomicsDB" id="257520"/>
<dbReference type="Pumba" id="P62317"/>
<dbReference type="Antibodypedia" id="31375">
    <property type="antibodies" value="203 antibodies from 28 providers"/>
</dbReference>
<dbReference type="DNASU" id="107686"/>
<dbReference type="Ensembl" id="ENSMUST00000049294.4">
    <property type="protein sequence ID" value="ENSMUSP00000037597.3"/>
    <property type="gene ID" value="ENSMUSG00000040824.4"/>
</dbReference>
<dbReference type="GeneID" id="107686"/>
<dbReference type="KEGG" id="mmu:107686"/>
<dbReference type="UCSC" id="uc009fkv.1">
    <property type="organism name" value="mouse"/>
</dbReference>
<dbReference type="AGR" id="MGI:98345"/>
<dbReference type="CTD" id="6633"/>
<dbReference type="MGI" id="MGI:98345">
    <property type="gene designation" value="Snrpd2"/>
</dbReference>
<dbReference type="VEuPathDB" id="HostDB:ENSMUSG00000040824"/>
<dbReference type="eggNOG" id="KOG3459">
    <property type="taxonomic scope" value="Eukaryota"/>
</dbReference>
<dbReference type="GeneTree" id="ENSGT00390000017608"/>
<dbReference type="HOGENOM" id="CLU_076902_2_1_1"/>
<dbReference type="InParanoid" id="P62317"/>
<dbReference type="OMA" id="DVKEMWT"/>
<dbReference type="OrthoDB" id="437526at2759"/>
<dbReference type="PhylomeDB" id="P62317"/>
<dbReference type="TreeFam" id="TF319595"/>
<dbReference type="Reactome" id="R-MMU-191859">
    <property type="pathway name" value="snRNP Assembly"/>
</dbReference>
<dbReference type="Reactome" id="R-MMU-72163">
    <property type="pathway name" value="mRNA Splicing - Major Pathway"/>
</dbReference>
<dbReference type="Reactome" id="R-MMU-72165">
    <property type="pathway name" value="mRNA Splicing - Minor Pathway"/>
</dbReference>
<dbReference type="BioGRID-ORCS" id="107686">
    <property type="hits" value="28 hits in 76 CRISPR screens"/>
</dbReference>
<dbReference type="ChiTaRS" id="Snrpd2">
    <property type="organism name" value="mouse"/>
</dbReference>
<dbReference type="EvolutionaryTrace" id="P62317"/>
<dbReference type="PRO" id="PR:P62317"/>
<dbReference type="Proteomes" id="UP000000589">
    <property type="component" value="Chromosome 7"/>
</dbReference>
<dbReference type="RNAct" id="P62317">
    <property type="molecule type" value="protein"/>
</dbReference>
<dbReference type="Bgee" id="ENSMUSG00000040824">
    <property type="expression patterns" value="Expressed in yolk sac and 69 other cell types or tissues"/>
</dbReference>
<dbReference type="ExpressionAtlas" id="P62317">
    <property type="expression patterns" value="baseline and differential"/>
</dbReference>
<dbReference type="GO" id="GO:0005829">
    <property type="term" value="C:cytosol"/>
    <property type="evidence" value="ECO:0000250"/>
    <property type="project" value="UniProtKB"/>
</dbReference>
<dbReference type="GO" id="GO:0034709">
    <property type="term" value="C:methylosome"/>
    <property type="evidence" value="ECO:0000250"/>
    <property type="project" value="UniProtKB"/>
</dbReference>
<dbReference type="GO" id="GO:0005634">
    <property type="term" value="C:nucleus"/>
    <property type="evidence" value="ECO:0000250"/>
    <property type="project" value="UniProtKB"/>
</dbReference>
<dbReference type="GO" id="GO:0034715">
    <property type="term" value="C:pICln-Sm protein complex"/>
    <property type="evidence" value="ECO:0000250"/>
    <property type="project" value="UniProtKB"/>
</dbReference>
<dbReference type="GO" id="GO:0034719">
    <property type="term" value="C:SMN-Sm protein complex"/>
    <property type="evidence" value="ECO:0000250"/>
    <property type="project" value="UniProtKB"/>
</dbReference>
<dbReference type="GO" id="GO:0005685">
    <property type="term" value="C:U1 snRNP"/>
    <property type="evidence" value="ECO:0000250"/>
    <property type="project" value="UniProtKB"/>
</dbReference>
<dbReference type="GO" id="GO:0005689">
    <property type="term" value="C:U12-type spliceosomal complex"/>
    <property type="evidence" value="ECO:0007669"/>
    <property type="project" value="Ensembl"/>
</dbReference>
<dbReference type="GO" id="GO:0071007">
    <property type="term" value="C:U2-type catalytic step 2 spliceosome"/>
    <property type="evidence" value="ECO:0000250"/>
    <property type="project" value="UniProtKB"/>
</dbReference>
<dbReference type="GO" id="GO:0071005">
    <property type="term" value="C:U2-type precatalytic spliceosome"/>
    <property type="evidence" value="ECO:0000250"/>
    <property type="project" value="UniProtKB"/>
</dbReference>
<dbReference type="GO" id="GO:0005684">
    <property type="term" value="C:U2-type spliceosomal complex"/>
    <property type="evidence" value="ECO:0000250"/>
    <property type="project" value="UniProtKB"/>
</dbReference>
<dbReference type="GO" id="GO:0005687">
    <property type="term" value="C:U4 snRNP"/>
    <property type="evidence" value="ECO:0000250"/>
    <property type="project" value="UniProtKB"/>
</dbReference>
<dbReference type="GO" id="GO:0046540">
    <property type="term" value="C:U4/U6 x U5 tri-snRNP complex"/>
    <property type="evidence" value="ECO:0000250"/>
    <property type="project" value="UniProtKB"/>
</dbReference>
<dbReference type="GO" id="GO:0003723">
    <property type="term" value="F:RNA binding"/>
    <property type="evidence" value="ECO:0007669"/>
    <property type="project" value="InterPro"/>
</dbReference>
<dbReference type="GO" id="GO:0000398">
    <property type="term" value="P:mRNA splicing, via spliceosome"/>
    <property type="evidence" value="ECO:0000250"/>
    <property type="project" value="UniProtKB"/>
</dbReference>
<dbReference type="GO" id="GO:0000387">
    <property type="term" value="P:spliceosomal snRNP assembly"/>
    <property type="evidence" value="ECO:0000250"/>
    <property type="project" value="UniProtKB"/>
</dbReference>
<dbReference type="CDD" id="cd01720">
    <property type="entry name" value="Sm_D2"/>
    <property type="match status" value="1"/>
</dbReference>
<dbReference type="FunFam" id="2.30.30.100:FF:000069">
    <property type="entry name" value="Small nuclear ribonucleoprotein Sm D2"/>
    <property type="match status" value="1"/>
</dbReference>
<dbReference type="Gene3D" id="2.30.30.100">
    <property type="match status" value="1"/>
</dbReference>
<dbReference type="InterPro" id="IPR010920">
    <property type="entry name" value="LSM_dom_sf"/>
</dbReference>
<dbReference type="InterPro" id="IPR047575">
    <property type="entry name" value="Sm"/>
</dbReference>
<dbReference type="InterPro" id="IPR027248">
    <property type="entry name" value="Sm_D2"/>
</dbReference>
<dbReference type="InterPro" id="IPR001163">
    <property type="entry name" value="Sm_dom_euk/arc"/>
</dbReference>
<dbReference type="PANTHER" id="PTHR12777">
    <property type="entry name" value="SMALL NUCLEAR RIBONUCLEOPROTEIN SM D2"/>
    <property type="match status" value="1"/>
</dbReference>
<dbReference type="Pfam" id="PF01423">
    <property type="entry name" value="LSM"/>
    <property type="match status" value="1"/>
</dbReference>
<dbReference type="SMART" id="SM00651">
    <property type="entry name" value="Sm"/>
    <property type="match status" value="1"/>
</dbReference>
<dbReference type="SUPFAM" id="SSF50182">
    <property type="entry name" value="Sm-like ribonucleoproteins"/>
    <property type="match status" value="1"/>
</dbReference>
<dbReference type="PROSITE" id="PS52002">
    <property type="entry name" value="SM"/>
    <property type="match status" value="1"/>
</dbReference>
<protein>
    <recommendedName>
        <fullName>Small nuclear ribonucleoprotein Sm D2</fullName>
        <shortName>Sm-D2</shortName>
    </recommendedName>
    <alternativeName>
        <fullName>snRNP core protein D2</fullName>
    </alternativeName>
</protein>
<feature type="initiator methionine" description="Removed" evidence="1">
    <location>
        <position position="1"/>
    </location>
</feature>
<feature type="chain" id="PRO_0000122208" description="Small nuclear ribonucleoprotein Sm D2">
    <location>
        <begin position="2"/>
        <end position="118"/>
    </location>
</feature>
<feature type="domain" description="Sm" evidence="2">
    <location>
        <begin position="29"/>
        <end position="115"/>
    </location>
</feature>
<feature type="region of interest" description="Disordered" evidence="3">
    <location>
        <begin position="1"/>
        <end position="31"/>
    </location>
</feature>
<feature type="compositionally biased region" description="Basic and acidic residues" evidence="3">
    <location>
        <begin position="7"/>
        <end position="21"/>
    </location>
</feature>
<feature type="modified residue" description="N-acetylserine" evidence="1">
    <location>
        <position position="2"/>
    </location>
</feature>
<feature type="modified residue" description="Phosphoserine" evidence="1">
    <location>
        <position position="9"/>
    </location>
</feature>
<feature type="modified residue" description="Phosphothreonine" evidence="5">
    <location>
        <position position="12"/>
    </location>
</feature>
<feature type="cross-link" description="Glycyl lysine isopeptide (Lys-Gly) (interchain with G-Cter in SUMO2)" evidence="1">
    <location>
        <position position="6"/>
    </location>
</feature>
<feature type="cross-link" description="Glycyl lysine isopeptide (Lys-Gly) (interchain with G-Cter in SUMO2)" evidence="1">
    <location>
        <position position="8"/>
    </location>
</feature>
<feature type="sequence conflict" description="In Ref. 1; BAC32551." evidence="4" ref="1">
    <original>V</original>
    <variation>M</variation>
    <location>
        <position position="31"/>
    </location>
</feature>
<reference key="1">
    <citation type="journal article" date="2005" name="Science">
        <title>The transcriptional landscape of the mammalian genome.</title>
        <authorList>
            <person name="Carninci P."/>
            <person name="Kasukawa T."/>
            <person name="Katayama S."/>
            <person name="Gough J."/>
            <person name="Frith M.C."/>
            <person name="Maeda N."/>
            <person name="Oyama R."/>
            <person name="Ravasi T."/>
            <person name="Lenhard B."/>
            <person name="Wells C."/>
            <person name="Kodzius R."/>
            <person name="Shimokawa K."/>
            <person name="Bajic V.B."/>
            <person name="Brenner S.E."/>
            <person name="Batalov S."/>
            <person name="Forrest A.R."/>
            <person name="Zavolan M."/>
            <person name="Davis M.J."/>
            <person name="Wilming L.G."/>
            <person name="Aidinis V."/>
            <person name="Allen J.E."/>
            <person name="Ambesi-Impiombato A."/>
            <person name="Apweiler R."/>
            <person name="Aturaliya R.N."/>
            <person name="Bailey T.L."/>
            <person name="Bansal M."/>
            <person name="Baxter L."/>
            <person name="Beisel K.W."/>
            <person name="Bersano T."/>
            <person name="Bono H."/>
            <person name="Chalk A.M."/>
            <person name="Chiu K.P."/>
            <person name="Choudhary V."/>
            <person name="Christoffels A."/>
            <person name="Clutterbuck D.R."/>
            <person name="Crowe M.L."/>
            <person name="Dalla E."/>
            <person name="Dalrymple B.P."/>
            <person name="de Bono B."/>
            <person name="Della Gatta G."/>
            <person name="di Bernardo D."/>
            <person name="Down T."/>
            <person name="Engstrom P."/>
            <person name="Fagiolini M."/>
            <person name="Faulkner G."/>
            <person name="Fletcher C.F."/>
            <person name="Fukushima T."/>
            <person name="Furuno M."/>
            <person name="Futaki S."/>
            <person name="Gariboldi M."/>
            <person name="Georgii-Hemming P."/>
            <person name="Gingeras T.R."/>
            <person name="Gojobori T."/>
            <person name="Green R.E."/>
            <person name="Gustincich S."/>
            <person name="Harbers M."/>
            <person name="Hayashi Y."/>
            <person name="Hensch T.K."/>
            <person name="Hirokawa N."/>
            <person name="Hill D."/>
            <person name="Huminiecki L."/>
            <person name="Iacono M."/>
            <person name="Ikeo K."/>
            <person name="Iwama A."/>
            <person name="Ishikawa T."/>
            <person name="Jakt M."/>
            <person name="Kanapin A."/>
            <person name="Katoh M."/>
            <person name="Kawasawa Y."/>
            <person name="Kelso J."/>
            <person name="Kitamura H."/>
            <person name="Kitano H."/>
            <person name="Kollias G."/>
            <person name="Krishnan S.P."/>
            <person name="Kruger A."/>
            <person name="Kummerfeld S.K."/>
            <person name="Kurochkin I.V."/>
            <person name="Lareau L.F."/>
            <person name="Lazarevic D."/>
            <person name="Lipovich L."/>
            <person name="Liu J."/>
            <person name="Liuni S."/>
            <person name="McWilliam S."/>
            <person name="Madan Babu M."/>
            <person name="Madera M."/>
            <person name="Marchionni L."/>
            <person name="Matsuda H."/>
            <person name="Matsuzawa S."/>
            <person name="Miki H."/>
            <person name="Mignone F."/>
            <person name="Miyake S."/>
            <person name="Morris K."/>
            <person name="Mottagui-Tabar S."/>
            <person name="Mulder N."/>
            <person name="Nakano N."/>
            <person name="Nakauchi H."/>
            <person name="Ng P."/>
            <person name="Nilsson R."/>
            <person name="Nishiguchi S."/>
            <person name="Nishikawa S."/>
            <person name="Nori F."/>
            <person name="Ohara O."/>
            <person name="Okazaki Y."/>
            <person name="Orlando V."/>
            <person name="Pang K.C."/>
            <person name="Pavan W.J."/>
            <person name="Pavesi G."/>
            <person name="Pesole G."/>
            <person name="Petrovsky N."/>
            <person name="Piazza S."/>
            <person name="Reed J."/>
            <person name="Reid J.F."/>
            <person name="Ring B.Z."/>
            <person name="Ringwald M."/>
            <person name="Rost B."/>
            <person name="Ruan Y."/>
            <person name="Salzberg S.L."/>
            <person name="Sandelin A."/>
            <person name="Schneider C."/>
            <person name="Schoenbach C."/>
            <person name="Sekiguchi K."/>
            <person name="Semple C.A."/>
            <person name="Seno S."/>
            <person name="Sessa L."/>
            <person name="Sheng Y."/>
            <person name="Shibata Y."/>
            <person name="Shimada H."/>
            <person name="Shimada K."/>
            <person name="Silva D."/>
            <person name="Sinclair B."/>
            <person name="Sperling S."/>
            <person name="Stupka E."/>
            <person name="Sugiura K."/>
            <person name="Sultana R."/>
            <person name="Takenaka Y."/>
            <person name="Taki K."/>
            <person name="Tammoja K."/>
            <person name="Tan S.L."/>
            <person name="Tang S."/>
            <person name="Taylor M.S."/>
            <person name="Tegner J."/>
            <person name="Teichmann S.A."/>
            <person name="Ueda H.R."/>
            <person name="van Nimwegen E."/>
            <person name="Verardo R."/>
            <person name="Wei C.L."/>
            <person name="Yagi K."/>
            <person name="Yamanishi H."/>
            <person name="Zabarovsky E."/>
            <person name="Zhu S."/>
            <person name="Zimmer A."/>
            <person name="Hide W."/>
            <person name="Bult C."/>
            <person name="Grimmond S.M."/>
            <person name="Teasdale R.D."/>
            <person name="Liu E.T."/>
            <person name="Brusic V."/>
            <person name="Quackenbush J."/>
            <person name="Wahlestedt C."/>
            <person name="Mattick J.S."/>
            <person name="Hume D.A."/>
            <person name="Kai C."/>
            <person name="Sasaki D."/>
            <person name="Tomaru Y."/>
            <person name="Fukuda S."/>
            <person name="Kanamori-Katayama M."/>
            <person name="Suzuki M."/>
            <person name="Aoki J."/>
            <person name="Arakawa T."/>
            <person name="Iida J."/>
            <person name="Imamura K."/>
            <person name="Itoh M."/>
            <person name="Kato T."/>
            <person name="Kawaji H."/>
            <person name="Kawagashira N."/>
            <person name="Kawashima T."/>
            <person name="Kojima M."/>
            <person name="Kondo S."/>
            <person name="Konno H."/>
            <person name="Nakano K."/>
            <person name="Ninomiya N."/>
            <person name="Nishio T."/>
            <person name="Okada M."/>
            <person name="Plessy C."/>
            <person name="Shibata K."/>
            <person name="Shiraki T."/>
            <person name="Suzuki S."/>
            <person name="Tagami M."/>
            <person name="Waki K."/>
            <person name="Watahiki A."/>
            <person name="Okamura-Oho Y."/>
            <person name="Suzuki H."/>
            <person name="Kawai J."/>
            <person name="Hayashizaki Y."/>
        </authorList>
    </citation>
    <scope>NUCLEOTIDE SEQUENCE [LARGE SCALE MRNA]</scope>
    <source>
        <strain>C57BL/6J</strain>
        <tissue>Corpora quadrigemina</tissue>
        <tissue>Pancreas</tissue>
        <tissue>Thymus</tissue>
    </source>
</reference>
<reference key="2">
    <citation type="journal article" date="2004" name="Genome Res.">
        <title>The status, quality, and expansion of the NIH full-length cDNA project: the Mammalian Gene Collection (MGC).</title>
        <authorList>
            <consortium name="The MGC Project Team"/>
        </authorList>
    </citation>
    <scope>NUCLEOTIDE SEQUENCE [LARGE SCALE MRNA]</scope>
    <source>
        <strain>C57BL/6J</strain>
        <tissue>Brain</tissue>
        <tissue>Mammary gland</tissue>
    </source>
</reference>
<reference key="3">
    <citation type="journal article" date="2010" name="Cell">
        <title>A tissue-specific atlas of mouse protein phosphorylation and expression.</title>
        <authorList>
            <person name="Huttlin E.L."/>
            <person name="Jedrychowski M.P."/>
            <person name="Elias J.E."/>
            <person name="Goswami T."/>
            <person name="Rad R."/>
            <person name="Beausoleil S.A."/>
            <person name="Villen J."/>
            <person name="Haas W."/>
            <person name="Sowa M.E."/>
            <person name="Gygi S.P."/>
        </authorList>
    </citation>
    <scope>PHOSPHORYLATION [LARGE SCALE ANALYSIS] AT THR-12</scope>
    <scope>IDENTIFICATION BY MASS SPECTROMETRY [LARGE SCALE ANALYSIS]</scope>
    <source>
        <tissue>Brain</tissue>
        <tissue>Brown adipose tissue</tissue>
        <tissue>Kidney</tissue>
        <tissue>Liver</tissue>
        <tissue>Pancreas</tissue>
        <tissue>Spleen</tissue>
        <tissue>Testis</tissue>
    </source>
</reference>
<keyword id="KW-0007">Acetylation</keyword>
<keyword id="KW-0963">Cytoplasm</keyword>
<keyword id="KW-1017">Isopeptide bond</keyword>
<keyword id="KW-0507">mRNA processing</keyword>
<keyword id="KW-0508">mRNA splicing</keyword>
<keyword id="KW-0539">Nucleus</keyword>
<keyword id="KW-0597">Phosphoprotein</keyword>
<keyword id="KW-1185">Reference proteome</keyword>
<keyword id="KW-0687">Ribonucleoprotein</keyword>
<keyword id="KW-0747">Spliceosome</keyword>
<keyword id="KW-0832">Ubl conjugation</keyword>
<gene>
    <name type="primary">Snrpd2</name>
</gene>
<name>SMD2_MOUSE</name>
<sequence length="118" mass="13527">MSLLNKPKSEMTPEELQKREEEEFNTGPLSVLTQSVKNNTQVLINCRNNKKLLGRVKAFDRHCNMVLENVKEMWTEVPKSGKGKKKSKPVNKDRYISKMFLRGDSVIVVLRNPLIAGK</sequence>
<comment type="function">
    <text evidence="1">Plays a role in pre-mRNA splicing as a core component of the spliceosomal U1, U2, U4 and U5 small nuclear ribonucleoproteins (snRNPs), the building blocks of the spliceosome. Component of both the pre-catalytic spliceosome B complex and activated spliceosome C complexes. As a component of the minor spliceosome, involved in the splicing of U12-type introns in pre-mRNAs.</text>
</comment>
<comment type="subunit">
    <text evidence="1">Core component of the spliceosomal U1, U2, U4 and U5 small nuclear ribonucleoproteins (snRNPs), the building blocks of the spliceosome. Most spliceosomal snRNPs contain a common set of Sm proteins, SNRPB, SNRPD1, SNRPD2, SNRPD3, SNRPE, SNRPF and SNRPG that assemble in a heptameric protein ring on the Sm site of the small nuclear RNA to form the core snRNP. Component of the U1 snRNP. The U1 snRNP is composed of the U1 snRNA and the 7 core Sm proteins SNRPB, SNRPD1, SNRPD2, SNRPD3, SNRPE, SNRPF and SNRPG, and at least three U1 snRNP-specific proteins SNRNP70/U1-70K, SNRPA/U1-A and SNRPC/U1-C. Component of the U4/U6-U5 tri-snRNP complex composed of the U4, U6 and U5 snRNAs and at least PRPF3, PRPF4, PRPF6, PRPF8, PRPF31, SNRNP200, TXNL4A, SNRNP40, SNRPB, SNRPD1, SNRPD2, SNRPD3, SNRPE, SNRPF, SNRPG, DDX23, CD2BP2, PPIH, SNU13, EFTUD2, SART1 and USP39, plus LSM2, LSM3, LSM4, LSM5, LSM6, LSM7 and LSM8. Component of the minor spliceosome, which splices U12-type introns. Part of the SMN-Sm complex that contains SMN1, GEMIN2/SIP1, DDX20/GEMIN3, GEMIN4, GEMIN5, GEMIN6, GEMIN7, GEMIN8, STRAP/UNRIP and the Sm proteins SNRPB, SNRPD1, SNRPD2, SNRPD3, SNRPE, SNRPF and SNRPG; catalyzes core snRNPs assembly. Forms a 6S pICln-Sm complex composed of CLNS1A/pICln, SNRPD1, SNRPD2, SNRPE, SNRPF and SNRPG; ring-like structure where CLNS1A/pICln mimics additional Sm proteins and which is unable to assemble into the core snRNP. Interacts with SMN1; the interaction is direct. Interacts with GEMIN2; the interaction is direct. Interacts with SNRPD1; the interaction is direct. Interacts with SNRPF; the interaction is direct.</text>
</comment>
<comment type="subcellular location">
    <subcellularLocation>
        <location evidence="1">Cytoplasm</location>
        <location evidence="1">Cytosol</location>
    </subcellularLocation>
    <subcellularLocation>
        <location evidence="1">Nucleus</location>
    </subcellularLocation>
    <text evidence="1">SMN-mediated assembly into core snRNPs occurs in the cytosol before SMN-mediated transport to the nucleus to be included in spliceosomes.</text>
</comment>
<comment type="similarity">
    <text evidence="4">Belongs to the snRNP core protein family.</text>
</comment>
<accession>P62317</accession>
<accession>P43330</accession>
<proteinExistence type="evidence at protein level"/>